<gene>
    <name evidence="1" type="primary">pckA</name>
    <name type="ordered locus">ECIAI39_3881</name>
</gene>
<name>PCKA_ECO7I</name>
<protein>
    <recommendedName>
        <fullName evidence="1">Phosphoenolpyruvate carboxykinase (ATP)</fullName>
        <shortName evidence="1">PCK</shortName>
        <shortName evidence="1">PEP carboxykinase</shortName>
        <shortName evidence="1">PEPCK</shortName>
        <ecNumber evidence="1">4.1.1.49</ecNumber>
    </recommendedName>
</protein>
<keyword id="KW-0007">Acetylation</keyword>
<keyword id="KW-0067">ATP-binding</keyword>
<keyword id="KW-0963">Cytoplasm</keyword>
<keyword id="KW-0210">Decarboxylase</keyword>
<keyword id="KW-0312">Gluconeogenesis</keyword>
<keyword id="KW-0456">Lyase</keyword>
<keyword id="KW-0464">Manganese</keyword>
<keyword id="KW-0479">Metal-binding</keyword>
<keyword id="KW-0547">Nucleotide-binding</keyword>
<reference key="1">
    <citation type="journal article" date="2009" name="PLoS Genet.">
        <title>Organised genome dynamics in the Escherichia coli species results in highly diverse adaptive paths.</title>
        <authorList>
            <person name="Touchon M."/>
            <person name="Hoede C."/>
            <person name="Tenaillon O."/>
            <person name="Barbe V."/>
            <person name="Baeriswyl S."/>
            <person name="Bidet P."/>
            <person name="Bingen E."/>
            <person name="Bonacorsi S."/>
            <person name="Bouchier C."/>
            <person name="Bouvet O."/>
            <person name="Calteau A."/>
            <person name="Chiapello H."/>
            <person name="Clermont O."/>
            <person name="Cruveiller S."/>
            <person name="Danchin A."/>
            <person name="Diard M."/>
            <person name="Dossat C."/>
            <person name="Karoui M.E."/>
            <person name="Frapy E."/>
            <person name="Garry L."/>
            <person name="Ghigo J.M."/>
            <person name="Gilles A.M."/>
            <person name="Johnson J."/>
            <person name="Le Bouguenec C."/>
            <person name="Lescat M."/>
            <person name="Mangenot S."/>
            <person name="Martinez-Jehanne V."/>
            <person name="Matic I."/>
            <person name="Nassif X."/>
            <person name="Oztas S."/>
            <person name="Petit M.A."/>
            <person name="Pichon C."/>
            <person name="Rouy Z."/>
            <person name="Ruf C.S."/>
            <person name="Schneider D."/>
            <person name="Tourret J."/>
            <person name="Vacherie B."/>
            <person name="Vallenet D."/>
            <person name="Medigue C."/>
            <person name="Rocha E.P.C."/>
            <person name="Denamur E."/>
        </authorList>
    </citation>
    <scope>NUCLEOTIDE SEQUENCE [LARGE SCALE GENOMIC DNA]</scope>
    <source>
        <strain>IAI39 / ExPEC</strain>
    </source>
</reference>
<feature type="chain" id="PRO_1000125062" description="Phosphoenolpyruvate carboxykinase (ATP)">
    <location>
        <begin position="1"/>
        <end position="540"/>
    </location>
</feature>
<feature type="binding site" evidence="1">
    <location>
        <position position="65"/>
    </location>
    <ligand>
        <name>substrate</name>
    </ligand>
</feature>
<feature type="binding site" evidence="1">
    <location>
        <position position="207"/>
    </location>
    <ligand>
        <name>substrate</name>
    </ligand>
</feature>
<feature type="binding site" evidence="1">
    <location>
        <position position="213"/>
    </location>
    <ligand>
        <name>ATP</name>
        <dbReference type="ChEBI" id="CHEBI:30616"/>
    </ligand>
</feature>
<feature type="binding site" evidence="1">
    <location>
        <position position="213"/>
    </location>
    <ligand>
        <name>Mn(2+)</name>
        <dbReference type="ChEBI" id="CHEBI:29035"/>
    </ligand>
</feature>
<feature type="binding site" evidence="1">
    <location>
        <position position="213"/>
    </location>
    <ligand>
        <name>substrate</name>
    </ligand>
</feature>
<feature type="binding site" evidence="1">
    <location>
        <position position="232"/>
    </location>
    <ligand>
        <name>ATP</name>
        <dbReference type="ChEBI" id="CHEBI:30616"/>
    </ligand>
</feature>
<feature type="binding site" evidence="1">
    <location>
        <position position="232"/>
    </location>
    <ligand>
        <name>Mn(2+)</name>
        <dbReference type="ChEBI" id="CHEBI:29035"/>
    </ligand>
</feature>
<feature type="binding site" evidence="1">
    <location>
        <begin position="248"/>
        <end position="256"/>
    </location>
    <ligand>
        <name>ATP</name>
        <dbReference type="ChEBI" id="CHEBI:30616"/>
    </ligand>
</feature>
<feature type="binding site" evidence="1">
    <location>
        <position position="269"/>
    </location>
    <ligand>
        <name>Mn(2+)</name>
        <dbReference type="ChEBI" id="CHEBI:29035"/>
    </ligand>
</feature>
<feature type="binding site" evidence="1">
    <location>
        <position position="297"/>
    </location>
    <ligand>
        <name>ATP</name>
        <dbReference type="ChEBI" id="CHEBI:30616"/>
    </ligand>
</feature>
<feature type="binding site" evidence="1">
    <location>
        <position position="333"/>
    </location>
    <ligand>
        <name>ATP</name>
        <dbReference type="ChEBI" id="CHEBI:30616"/>
    </ligand>
</feature>
<feature type="binding site" evidence="1">
    <location>
        <position position="333"/>
    </location>
    <ligand>
        <name>substrate</name>
    </ligand>
</feature>
<feature type="binding site" evidence="1">
    <location>
        <begin position="449"/>
        <end position="450"/>
    </location>
    <ligand>
        <name>ATP</name>
        <dbReference type="ChEBI" id="CHEBI:30616"/>
    </ligand>
</feature>
<feature type="binding site" evidence="1">
    <location>
        <position position="455"/>
    </location>
    <ligand>
        <name>ATP</name>
        <dbReference type="ChEBI" id="CHEBI:30616"/>
    </ligand>
</feature>
<feature type="modified residue" description="N6-acetyllysine" evidence="1">
    <location>
        <position position="87"/>
    </location>
</feature>
<feature type="modified residue" description="N6-acetyllysine" evidence="1">
    <location>
        <position position="523"/>
    </location>
</feature>
<accession>B7NMG6</accession>
<evidence type="ECO:0000255" key="1">
    <source>
        <dbReference type="HAMAP-Rule" id="MF_00453"/>
    </source>
</evidence>
<comment type="function">
    <text evidence="1">Involved in the gluconeogenesis. Catalyzes the conversion of oxaloacetate (OAA) to phosphoenolpyruvate (PEP) through direct phosphoryl transfer between the nucleoside triphosphate and OAA.</text>
</comment>
<comment type="catalytic activity">
    <reaction evidence="1">
        <text>oxaloacetate + ATP = phosphoenolpyruvate + ADP + CO2</text>
        <dbReference type="Rhea" id="RHEA:18617"/>
        <dbReference type="ChEBI" id="CHEBI:16452"/>
        <dbReference type="ChEBI" id="CHEBI:16526"/>
        <dbReference type="ChEBI" id="CHEBI:30616"/>
        <dbReference type="ChEBI" id="CHEBI:58702"/>
        <dbReference type="ChEBI" id="CHEBI:456216"/>
        <dbReference type="EC" id="4.1.1.49"/>
    </reaction>
</comment>
<comment type="cofactor">
    <cofactor evidence="1">
        <name>Mn(2+)</name>
        <dbReference type="ChEBI" id="CHEBI:29035"/>
    </cofactor>
    <text evidence="1">Binds 1 Mn(2+) ion per subunit.</text>
</comment>
<comment type="pathway">
    <text evidence="1">Carbohydrate biosynthesis; gluconeogenesis.</text>
</comment>
<comment type="subunit">
    <text evidence="1">Monomer.</text>
</comment>
<comment type="subcellular location">
    <subcellularLocation>
        <location evidence="1">Cytoplasm</location>
    </subcellularLocation>
</comment>
<comment type="similarity">
    <text evidence="1">Belongs to the phosphoenolpyruvate carboxykinase (ATP) family.</text>
</comment>
<organism>
    <name type="scientific">Escherichia coli O7:K1 (strain IAI39 / ExPEC)</name>
    <dbReference type="NCBI Taxonomy" id="585057"/>
    <lineage>
        <taxon>Bacteria</taxon>
        <taxon>Pseudomonadati</taxon>
        <taxon>Pseudomonadota</taxon>
        <taxon>Gammaproteobacteria</taxon>
        <taxon>Enterobacterales</taxon>
        <taxon>Enterobacteriaceae</taxon>
        <taxon>Escherichia</taxon>
    </lineage>
</organism>
<proteinExistence type="inferred from homology"/>
<dbReference type="EC" id="4.1.1.49" evidence="1"/>
<dbReference type="EMBL" id="CU928164">
    <property type="protein sequence ID" value="CAR19994.1"/>
    <property type="molecule type" value="Genomic_DNA"/>
</dbReference>
<dbReference type="RefSeq" id="WP_001361659.1">
    <property type="nucleotide sequence ID" value="NC_011750.1"/>
</dbReference>
<dbReference type="RefSeq" id="YP_002409775.1">
    <property type="nucleotide sequence ID" value="NC_011750.1"/>
</dbReference>
<dbReference type="SMR" id="B7NMG6"/>
<dbReference type="STRING" id="585057.ECIAI39_3881"/>
<dbReference type="KEGG" id="ect:ECIAI39_3881"/>
<dbReference type="PATRIC" id="fig|585057.6.peg.4019"/>
<dbReference type="HOGENOM" id="CLU_018247_0_1_6"/>
<dbReference type="UniPathway" id="UPA00138"/>
<dbReference type="Proteomes" id="UP000000749">
    <property type="component" value="Chromosome"/>
</dbReference>
<dbReference type="GO" id="GO:0005829">
    <property type="term" value="C:cytosol"/>
    <property type="evidence" value="ECO:0007669"/>
    <property type="project" value="TreeGrafter"/>
</dbReference>
<dbReference type="GO" id="GO:0005524">
    <property type="term" value="F:ATP binding"/>
    <property type="evidence" value="ECO:0007669"/>
    <property type="project" value="UniProtKB-UniRule"/>
</dbReference>
<dbReference type="GO" id="GO:0046872">
    <property type="term" value="F:metal ion binding"/>
    <property type="evidence" value="ECO:0007669"/>
    <property type="project" value="UniProtKB-KW"/>
</dbReference>
<dbReference type="GO" id="GO:0004612">
    <property type="term" value="F:phosphoenolpyruvate carboxykinase (ATP) activity"/>
    <property type="evidence" value="ECO:0007669"/>
    <property type="project" value="UniProtKB-UniRule"/>
</dbReference>
<dbReference type="GO" id="GO:0006094">
    <property type="term" value="P:gluconeogenesis"/>
    <property type="evidence" value="ECO:0007669"/>
    <property type="project" value="UniProtKB-UniRule"/>
</dbReference>
<dbReference type="CDD" id="cd00484">
    <property type="entry name" value="PEPCK_ATP"/>
    <property type="match status" value="1"/>
</dbReference>
<dbReference type="FunFam" id="2.170.8.10:FF:000001">
    <property type="entry name" value="Phosphoenolpyruvate carboxykinase (ATP)"/>
    <property type="match status" value="1"/>
</dbReference>
<dbReference type="FunFam" id="3.40.449.10:FF:000001">
    <property type="entry name" value="Phosphoenolpyruvate carboxykinase (ATP)"/>
    <property type="match status" value="1"/>
</dbReference>
<dbReference type="Gene3D" id="3.90.228.20">
    <property type="match status" value="1"/>
</dbReference>
<dbReference type="Gene3D" id="3.40.449.10">
    <property type="entry name" value="Phosphoenolpyruvate Carboxykinase, domain 1"/>
    <property type="match status" value="1"/>
</dbReference>
<dbReference type="Gene3D" id="2.170.8.10">
    <property type="entry name" value="Phosphoenolpyruvate Carboxykinase, domain 2"/>
    <property type="match status" value="1"/>
</dbReference>
<dbReference type="HAMAP" id="MF_00453">
    <property type="entry name" value="PEPCK_ATP"/>
    <property type="match status" value="1"/>
</dbReference>
<dbReference type="InterPro" id="IPR001272">
    <property type="entry name" value="PEP_carboxykinase_ATP"/>
</dbReference>
<dbReference type="InterPro" id="IPR013035">
    <property type="entry name" value="PEP_carboxykinase_C"/>
</dbReference>
<dbReference type="InterPro" id="IPR008210">
    <property type="entry name" value="PEP_carboxykinase_N"/>
</dbReference>
<dbReference type="InterPro" id="IPR015994">
    <property type="entry name" value="PEPCK_ATP_CS"/>
</dbReference>
<dbReference type="NCBIfam" id="TIGR00224">
    <property type="entry name" value="pckA"/>
    <property type="match status" value="1"/>
</dbReference>
<dbReference type="NCBIfam" id="NF006819">
    <property type="entry name" value="PRK09344.1-1"/>
    <property type="match status" value="1"/>
</dbReference>
<dbReference type="NCBIfam" id="NF006820">
    <property type="entry name" value="PRK09344.1-2"/>
    <property type="match status" value="1"/>
</dbReference>
<dbReference type="NCBIfam" id="NF006821">
    <property type="entry name" value="PRK09344.1-3"/>
    <property type="match status" value="1"/>
</dbReference>
<dbReference type="PANTHER" id="PTHR30031:SF0">
    <property type="entry name" value="PHOSPHOENOLPYRUVATE CARBOXYKINASE (ATP)"/>
    <property type="match status" value="1"/>
</dbReference>
<dbReference type="PANTHER" id="PTHR30031">
    <property type="entry name" value="PHOSPHOENOLPYRUVATE CARBOXYKINASE ATP"/>
    <property type="match status" value="1"/>
</dbReference>
<dbReference type="Pfam" id="PF01293">
    <property type="entry name" value="PEPCK_ATP"/>
    <property type="match status" value="1"/>
</dbReference>
<dbReference type="PIRSF" id="PIRSF006294">
    <property type="entry name" value="PEP_crbxkin"/>
    <property type="match status" value="1"/>
</dbReference>
<dbReference type="SUPFAM" id="SSF68923">
    <property type="entry name" value="PEP carboxykinase N-terminal domain"/>
    <property type="match status" value="1"/>
</dbReference>
<dbReference type="SUPFAM" id="SSF53795">
    <property type="entry name" value="PEP carboxykinase-like"/>
    <property type="match status" value="1"/>
</dbReference>
<dbReference type="PROSITE" id="PS00532">
    <property type="entry name" value="PEPCK_ATP"/>
    <property type="match status" value="1"/>
</dbReference>
<sequence length="540" mass="59615">MRVNNGLTPQELEAYGISDVHDIVYNPSYDLLYQEELDPSLTGYERGVLTNLGAVAVDTGIFTGRSPKDKYIVRDDTTRDTFWWADKGKGKNDNKPLSPETWQHLKGLVTKQLSGKRLFVVDAFCGANPDTRLSVRFITEVAWQAHFVKNMFIRPSDEELAGFKPDFIVMNGAKCTNPQWKEQGLNSENFVAFNLTERMQLIGGTWYGGEMKKGMFSMMNYLLPLKGIASMHCSANVGEKGDVAVFFGLSGTGKTTLSTDPKRRLIGDDEHGWDDDGVFNFEGGCYAKTIKLSKEAEPEIYNAIRRDALLENVTVREDGSIDFDDGSKTENTRVSYPIYHIENIVKPVSKAGHATKVIFLTADAFGVLPPVSRLTADQTQYHFLSGFTAKLAGTERGITEPTPTFSACFGAAFLSLHPTQYAEVLVKRMQAAGAQAYLVNTGWNGTGKRISIKDTRAIIDAILNGSLDNAETFTLPMFNLAIPTELPGVDTKILDPRNTYASPEQWQEKAETLAKLFIDNFDKYTDTPAGAALVAAGPKL</sequence>